<accession>C3NF81</accession>
<name>Y855_SACI1</name>
<proteinExistence type="inferred from homology"/>
<organism>
    <name type="scientific">Saccharolobus islandicus (strain Y.N.15.51 / Yellowstone #2)</name>
    <name type="common">Sulfolobus islandicus</name>
    <dbReference type="NCBI Taxonomy" id="419942"/>
    <lineage>
        <taxon>Archaea</taxon>
        <taxon>Thermoproteota</taxon>
        <taxon>Thermoprotei</taxon>
        <taxon>Sulfolobales</taxon>
        <taxon>Sulfolobaceae</taxon>
        <taxon>Saccharolobus</taxon>
    </lineage>
</organism>
<reference key="1">
    <citation type="journal article" date="2009" name="Proc. Natl. Acad. Sci. U.S.A.">
        <title>Biogeography of the Sulfolobus islandicus pan-genome.</title>
        <authorList>
            <person name="Reno M.L."/>
            <person name="Held N.L."/>
            <person name="Fields C.J."/>
            <person name="Burke P.V."/>
            <person name="Whitaker R.J."/>
        </authorList>
    </citation>
    <scope>NUCLEOTIDE SEQUENCE [LARGE SCALE GENOMIC DNA]</scope>
    <source>
        <strain>Y.N.15.51 / Yellowstone #2</strain>
    </source>
</reference>
<feature type="chain" id="PRO_1000212383" description="Protein YN1551_0855">
    <location>
        <begin position="1"/>
        <end position="227"/>
    </location>
</feature>
<feature type="domain" description="AMMECR1" evidence="1">
    <location>
        <begin position="15"/>
        <end position="209"/>
    </location>
</feature>
<evidence type="ECO:0000255" key="1">
    <source>
        <dbReference type="HAMAP-Rule" id="MF_00645"/>
    </source>
</evidence>
<protein>
    <recommendedName>
        <fullName evidence="1">Protein YN1551_0855</fullName>
    </recommendedName>
</protein>
<dbReference type="EMBL" id="CP001404">
    <property type="protein sequence ID" value="ACP47977.1"/>
    <property type="molecule type" value="Genomic_DNA"/>
</dbReference>
<dbReference type="SMR" id="C3NF81"/>
<dbReference type="KEGG" id="sin:YN1551_0855"/>
<dbReference type="HOGENOM" id="CLU_095686_1_1_2"/>
<dbReference type="Proteomes" id="UP000006818">
    <property type="component" value="Chromosome"/>
</dbReference>
<dbReference type="Gene3D" id="3.30.700.20">
    <property type="entry name" value="Hypothetical protein ph0010, domain 1"/>
    <property type="match status" value="1"/>
</dbReference>
<dbReference type="Gene3D" id="3.30.1490.150">
    <property type="entry name" value="Hypothetical protein ph0010, domain 2"/>
    <property type="match status" value="1"/>
</dbReference>
<dbReference type="HAMAP" id="MF_00645">
    <property type="entry name" value="AMMECR1"/>
    <property type="match status" value="1"/>
</dbReference>
<dbReference type="InterPro" id="IPR023473">
    <property type="entry name" value="AMMECR1"/>
</dbReference>
<dbReference type="InterPro" id="IPR036071">
    <property type="entry name" value="AMMECR1_dom_sf"/>
</dbReference>
<dbReference type="InterPro" id="IPR002733">
    <property type="entry name" value="AMMECR1_domain"/>
</dbReference>
<dbReference type="InterPro" id="IPR027485">
    <property type="entry name" value="AMMECR1_N"/>
</dbReference>
<dbReference type="InterPro" id="IPR027623">
    <property type="entry name" value="AmmeMemoSam_A"/>
</dbReference>
<dbReference type="InterPro" id="IPR023472">
    <property type="entry name" value="Uncharacterised_MJ0810"/>
</dbReference>
<dbReference type="NCBIfam" id="TIGR04335">
    <property type="entry name" value="AmmeMemoSam_A"/>
    <property type="match status" value="1"/>
</dbReference>
<dbReference type="NCBIfam" id="TIGR00296">
    <property type="entry name" value="TIGR00296 family protein"/>
    <property type="match status" value="1"/>
</dbReference>
<dbReference type="PANTHER" id="PTHR13016:SF0">
    <property type="entry name" value="AMME SYNDROME CANDIDATE GENE 1 PROTEIN"/>
    <property type="match status" value="1"/>
</dbReference>
<dbReference type="PANTHER" id="PTHR13016">
    <property type="entry name" value="AMMECR1 HOMOLOG"/>
    <property type="match status" value="1"/>
</dbReference>
<dbReference type="Pfam" id="PF01871">
    <property type="entry name" value="AMMECR1"/>
    <property type="match status" value="1"/>
</dbReference>
<dbReference type="SUPFAM" id="SSF143447">
    <property type="entry name" value="AMMECR1-like"/>
    <property type="match status" value="1"/>
</dbReference>
<dbReference type="PROSITE" id="PS51112">
    <property type="entry name" value="AMMECR1"/>
    <property type="match status" value="1"/>
</dbReference>
<gene>
    <name type="ordered locus">YN1551_0855</name>
</gene>
<sequence length="227" mass="25711">MIQGDLVQIQELNNEIGRFLIEIARKAIKEEFKLDKLDLSNYNNPILDKKGLAFVTLEKITYNTSSLRGCIGYVEAVAPLKQIVASAAKAAAFSDPRFNPLQKDELSEIIIEVTVLTKPEEIKVKDRWDLPKIIKVGEDGLIVEKGILHSGLLLPQVPMEYCWDEETFLAETCIKASLEPDCWLDNSVRIKRFHGIIFRETRPDGSDIIVVKPSDIKCKLNELLNNF</sequence>